<name>YQGF_HALOH</name>
<gene>
    <name type="ordered locus">Hore_05800</name>
</gene>
<keyword id="KW-0963">Cytoplasm</keyword>
<keyword id="KW-0378">Hydrolase</keyword>
<keyword id="KW-0540">Nuclease</keyword>
<keyword id="KW-1185">Reference proteome</keyword>
<keyword id="KW-0690">Ribosome biogenesis</keyword>
<evidence type="ECO:0000255" key="1">
    <source>
        <dbReference type="HAMAP-Rule" id="MF_00651"/>
    </source>
</evidence>
<protein>
    <recommendedName>
        <fullName evidence="1">Putative pre-16S rRNA nuclease</fullName>
        <ecNumber evidence="1">3.1.-.-</ecNumber>
    </recommendedName>
</protein>
<reference key="1">
    <citation type="journal article" date="2009" name="PLoS ONE">
        <title>Genome analysis of the anaerobic thermohalophilic bacterium Halothermothrix orenii.</title>
        <authorList>
            <person name="Mavromatis K."/>
            <person name="Ivanova N."/>
            <person name="Anderson I."/>
            <person name="Lykidis A."/>
            <person name="Hooper S.D."/>
            <person name="Sun H."/>
            <person name="Kunin V."/>
            <person name="Lapidus A."/>
            <person name="Hugenholtz P."/>
            <person name="Patel B."/>
            <person name="Kyrpides N.C."/>
        </authorList>
    </citation>
    <scope>NUCLEOTIDE SEQUENCE [LARGE SCALE GENOMIC DNA]</scope>
    <source>
        <strain>H 168 / OCM 544 / DSM 9562</strain>
    </source>
</reference>
<feature type="chain" id="PRO_1000147483" description="Putative pre-16S rRNA nuclease">
    <location>
        <begin position="1"/>
        <end position="140"/>
    </location>
</feature>
<sequence length="140" mass="15816">MRIMGLDYGDRRIGVAISDKLGMTAQGQEVIIRKTPEEDLEVIKGLIDKYEVEEIIVGMPKNMDGSLGPRAEKTRDFIDFLQKSLDTPVKVWDERLSTVEAERVLIEADVSRKKRKGVIDKVAASIILQGYLNYQNKLHG</sequence>
<organism>
    <name type="scientific">Halothermothrix orenii (strain H 168 / OCM 544 / DSM 9562)</name>
    <dbReference type="NCBI Taxonomy" id="373903"/>
    <lineage>
        <taxon>Bacteria</taxon>
        <taxon>Bacillati</taxon>
        <taxon>Bacillota</taxon>
        <taxon>Clostridia</taxon>
        <taxon>Halanaerobiales</taxon>
        <taxon>Halothermotrichaceae</taxon>
        <taxon>Halothermothrix</taxon>
    </lineage>
</organism>
<proteinExistence type="inferred from homology"/>
<accession>B8D2B0</accession>
<comment type="function">
    <text evidence="1">Could be a nuclease involved in processing of the 5'-end of pre-16S rRNA.</text>
</comment>
<comment type="subcellular location">
    <subcellularLocation>
        <location evidence="1">Cytoplasm</location>
    </subcellularLocation>
</comment>
<comment type="similarity">
    <text evidence="1">Belongs to the YqgF nuclease family.</text>
</comment>
<dbReference type="EC" id="3.1.-.-" evidence="1"/>
<dbReference type="EMBL" id="CP001098">
    <property type="protein sequence ID" value="ACL69337.1"/>
    <property type="molecule type" value="Genomic_DNA"/>
</dbReference>
<dbReference type="RefSeq" id="WP_012635525.1">
    <property type="nucleotide sequence ID" value="NC_011899.1"/>
</dbReference>
<dbReference type="SMR" id="B8D2B0"/>
<dbReference type="STRING" id="373903.Hore_05800"/>
<dbReference type="KEGG" id="hor:Hore_05800"/>
<dbReference type="eggNOG" id="COG0816">
    <property type="taxonomic scope" value="Bacteria"/>
</dbReference>
<dbReference type="HOGENOM" id="CLU_098240_2_0_9"/>
<dbReference type="OrthoDB" id="9796140at2"/>
<dbReference type="Proteomes" id="UP000000719">
    <property type="component" value="Chromosome"/>
</dbReference>
<dbReference type="GO" id="GO:0005829">
    <property type="term" value="C:cytosol"/>
    <property type="evidence" value="ECO:0007669"/>
    <property type="project" value="TreeGrafter"/>
</dbReference>
<dbReference type="GO" id="GO:0004518">
    <property type="term" value="F:nuclease activity"/>
    <property type="evidence" value="ECO:0007669"/>
    <property type="project" value="UniProtKB-KW"/>
</dbReference>
<dbReference type="GO" id="GO:0000967">
    <property type="term" value="P:rRNA 5'-end processing"/>
    <property type="evidence" value="ECO:0007669"/>
    <property type="project" value="UniProtKB-UniRule"/>
</dbReference>
<dbReference type="CDD" id="cd16964">
    <property type="entry name" value="YqgF"/>
    <property type="match status" value="1"/>
</dbReference>
<dbReference type="Gene3D" id="3.30.420.140">
    <property type="entry name" value="YqgF/RNase H-like domain"/>
    <property type="match status" value="1"/>
</dbReference>
<dbReference type="HAMAP" id="MF_00651">
    <property type="entry name" value="Nuclease_YqgF"/>
    <property type="match status" value="1"/>
</dbReference>
<dbReference type="InterPro" id="IPR012337">
    <property type="entry name" value="RNaseH-like_sf"/>
</dbReference>
<dbReference type="InterPro" id="IPR005227">
    <property type="entry name" value="YqgF"/>
</dbReference>
<dbReference type="InterPro" id="IPR006641">
    <property type="entry name" value="YqgF/RNaseH-like_dom"/>
</dbReference>
<dbReference type="InterPro" id="IPR037027">
    <property type="entry name" value="YqgF/RNaseH-like_dom_sf"/>
</dbReference>
<dbReference type="NCBIfam" id="TIGR00250">
    <property type="entry name" value="RNAse_H_YqgF"/>
    <property type="match status" value="1"/>
</dbReference>
<dbReference type="PANTHER" id="PTHR33317">
    <property type="entry name" value="POLYNUCLEOTIDYL TRANSFERASE, RIBONUCLEASE H-LIKE SUPERFAMILY PROTEIN"/>
    <property type="match status" value="1"/>
</dbReference>
<dbReference type="PANTHER" id="PTHR33317:SF4">
    <property type="entry name" value="POLYNUCLEOTIDYL TRANSFERASE, RIBONUCLEASE H-LIKE SUPERFAMILY PROTEIN"/>
    <property type="match status" value="1"/>
</dbReference>
<dbReference type="Pfam" id="PF03652">
    <property type="entry name" value="RuvX"/>
    <property type="match status" value="1"/>
</dbReference>
<dbReference type="SMART" id="SM00732">
    <property type="entry name" value="YqgFc"/>
    <property type="match status" value="1"/>
</dbReference>
<dbReference type="SUPFAM" id="SSF53098">
    <property type="entry name" value="Ribonuclease H-like"/>
    <property type="match status" value="1"/>
</dbReference>